<organism>
    <name type="scientific">Gloeothece citriformis (strain PCC 7424)</name>
    <name type="common">Cyanothece sp. (strain PCC 7424)</name>
    <dbReference type="NCBI Taxonomy" id="65393"/>
    <lineage>
        <taxon>Bacteria</taxon>
        <taxon>Bacillati</taxon>
        <taxon>Cyanobacteriota</taxon>
        <taxon>Cyanophyceae</taxon>
        <taxon>Oscillatoriophycideae</taxon>
        <taxon>Chroococcales</taxon>
        <taxon>Aphanothecaceae</taxon>
        <taxon>Gloeothece</taxon>
        <taxon>Gloeothece citriformis</taxon>
    </lineage>
</organism>
<evidence type="ECO:0000255" key="1">
    <source>
        <dbReference type="HAMAP-Rule" id="MF_01370"/>
    </source>
</evidence>
<reference key="1">
    <citation type="journal article" date="2011" name="MBio">
        <title>Novel metabolic attributes of the genus Cyanothece, comprising a group of unicellular nitrogen-fixing Cyanobacteria.</title>
        <authorList>
            <person name="Bandyopadhyay A."/>
            <person name="Elvitigala T."/>
            <person name="Welsh E."/>
            <person name="Stockel J."/>
            <person name="Liberton M."/>
            <person name="Min H."/>
            <person name="Sherman L.A."/>
            <person name="Pakrasi H.B."/>
        </authorList>
    </citation>
    <scope>NUCLEOTIDE SEQUENCE [LARGE SCALE GENOMIC DNA]</scope>
    <source>
        <strain>PCC 7424</strain>
    </source>
</reference>
<accession>B7K9Y7</accession>
<sequence length="111" mass="12710">MAQIQFARGLVEDAIPTIRLTRSRTGDSGTATFYFESPNIFADEQTQEVTGMYLIDSEGEIVSREVKGKFINGKPHAIEAILIMNSPDEWERFMRFMERYAQEHGLEFTKA</sequence>
<dbReference type="EMBL" id="CP001291">
    <property type="protein sequence ID" value="ACK71343.1"/>
    <property type="molecule type" value="Genomic_DNA"/>
</dbReference>
<dbReference type="RefSeq" id="WP_015954941.1">
    <property type="nucleotide sequence ID" value="NC_011729.1"/>
</dbReference>
<dbReference type="SMR" id="B7K9Y7"/>
<dbReference type="STRING" id="65393.PCC7424_2939"/>
<dbReference type="KEGG" id="cyc:PCC7424_2939"/>
<dbReference type="eggNOG" id="ENOG5031GDS">
    <property type="taxonomic scope" value="Bacteria"/>
</dbReference>
<dbReference type="HOGENOM" id="CLU_137323_1_0_3"/>
<dbReference type="OrthoDB" id="559598at2"/>
<dbReference type="Proteomes" id="UP000002384">
    <property type="component" value="Chromosome"/>
</dbReference>
<dbReference type="GO" id="GO:0009654">
    <property type="term" value="C:photosystem II oxygen evolving complex"/>
    <property type="evidence" value="ECO:0007669"/>
    <property type="project" value="InterPro"/>
</dbReference>
<dbReference type="GO" id="GO:0031676">
    <property type="term" value="C:plasma membrane-derived thylakoid membrane"/>
    <property type="evidence" value="ECO:0007669"/>
    <property type="project" value="UniProtKB-SubCell"/>
</dbReference>
<dbReference type="GO" id="GO:0015979">
    <property type="term" value="P:photosynthesis"/>
    <property type="evidence" value="ECO:0007669"/>
    <property type="project" value="UniProtKB-UniRule"/>
</dbReference>
<dbReference type="Gene3D" id="2.40.30.220">
    <property type="entry name" value="Photosystem II Psb28"/>
    <property type="match status" value="1"/>
</dbReference>
<dbReference type="HAMAP" id="MF_01370">
    <property type="entry name" value="PSII_Psb28"/>
    <property type="match status" value="1"/>
</dbReference>
<dbReference type="InterPro" id="IPR038676">
    <property type="entry name" value="Psb28_c1_sf"/>
</dbReference>
<dbReference type="InterPro" id="IPR005610">
    <property type="entry name" value="PSII_Psb28_class-1"/>
</dbReference>
<dbReference type="NCBIfam" id="TIGR03047">
    <property type="entry name" value="PS_II_psb28"/>
    <property type="match status" value="1"/>
</dbReference>
<dbReference type="PANTHER" id="PTHR34963">
    <property type="match status" value="1"/>
</dbReference>
<dbReference type="PANTHER" id="PTHR34963:SF2">
    <property type="entry name" value="PHOTOSYSTEM II REACTION CENTER PSB28 PROTEIN, CHLOROPLASTIC"/>
    <property type="match status" value="1"/>
</dbReference>
<dbReference type="Pfam" id="PF03912">
    <property type="entry name" value="Psb28"/>
    <property type="match status" value="1"/>
</dbReference>
<proteinExistence type="inferred from homology"/>
<comment type="subunit">
    <text evidence="1">Part of the photosystem II complex.</text>
</comment>
<comment type="subcellular location">
    <subcellularLocation>
        <location evidence="1">Cellular thylakoid membrane</location>
        <topology evidence="1">Peripheral membrane protein</topology>
        <orientation evidence="1">Cytoplasmic side</orientation>
    </subcellularLocation>
</comment>
<comment type="similarity">
    <text evidence="1">Belongs to the Psb28 family.</text>
</comment>
<keyword id="KW-0472">Membrane</keyword>
<keyword id="KW-0602">Photosynthesis</keyword>
<keyword id="KW-0604">Photosystem II</keyword>
<keyword id="KW-1185">Reference proteome</keyword>
<keyword id="KW-0793">Thylakoid</keyword>
<protein>
    <recommendedName>
        <fullName evidence="1">Photosystem II reaction center Psb28 protein</fullName>
    </recommendedName>
    <alternativeName>
        <fullName evidence="1">Photosystem II 13 kDa protein</fullName>
    </alternativeName>
    <alternativeName>
        <fullName evidence="1">Photosystem II reaction center W protein</fullName>
    </alternativeName>
</protein>
<name>PSB28_GLOC7</name>
<gene>
    <name evidence="1" type="primary">psb28</name>
    <name type="ordered locus">PCC7424_2939</name>
</gene>
<feature type="chain" id="PRO_1000144629" description="Photosystem II reaction center Psb28 protein">
    <location>
        <begin position="1"/>
        <end position="111"/>
    </location>
</feature>